<sequence>DQPVERHAENKRHLIPAVMRAMTMNADRRVQCCRIEFCDEDCGCCYH</sequence>
<keyword id="KW-1015">Disulfide bond</keyword>
<keyword id="KW-0964">Secreted</keyword>
<keyword id="KW-0800">Toxin</keyword>
<comment type="subcellular location">
    <subcellularLocation>
        <location evidence="4">Secreted</location>
    </subcellularLocation>
</comment>
<comment type="tissue specificity">
    <text evidence="4">Expressed by the venom duct.</text>
</comment>
<comment type="domain">
    <text evidence="3">The cysteine framework is III (CC-C-C-CC). Classified in the M-1 branch, since 1 residue stands between the fourth and the fifth cysteine residues.</text>
</comment>
<comment type="similarity">
    <text evidence="3">Belongs to the conotoxin M superfamily.</text>
</comment>
<evidence type="ECO:0000250" key="1">
    <source>
        <dbReference type="UniProtKB" id="Q5EHP3"/>
    </source>
</evidence>
<evidence type="ECO:0000303" key="2">
    <source>
    </source>
</evidence>
<evidence type="ECO:0000305" key="3"/>
<evidence type="ECO:0000305" key="4">
    <source>
    </source>
</evidence>
<evidence type="ECO:0000312" key="5">
    <source>
        <dbReference type="EMBL" id="AUJ88069.1"/>
    </source>
</evidence>
<feature type="propeptide" id="PRO_0000444779" evidence="4">
    <location>
        <begin position="1" status="less than"/>
        <end position="31"/>
    </location>
</feature>
<feature type="peptide" id="PRO_0000444780" description="Conotoxin reg3.11" evidence="4">
    <location>
        <begin position="32"/>
        <end position="45"/>
    </location>
</feature>
<feature type="propeptide" id="PRO_0000444781" evidence="4">
    <location>
        <begin position="46"/>
        <end position="47"/>
    </location>
</feature>
<feature type="disulfide bond" evidence="1">
    <location>
        <begin position="32"/>
        <end position="44"/>
    </location>
</feature>
<feature type="disulfide bond" evidence="1">
    <location>
        <begin position="33"/>
        <end position="42"/>
    </location>
</feature>
<feature type="disulfide bond" evidence="1">
    <location>
        <begin position="38"/>
        <end position="45"/>
    </location>
</feature>
<feature type="non-terminal residue" evidence="5">
    <location>
        <position position="1"/>
    </location>
</feature>
<reference key="1">
    <citation type="journal article" date="2017" name="FEBS J.">
        <title>Structural plasticity of Mini-M conotoxins: expression of all mini-M subtypes by Conus regius.</title>
        <authorList>
            <person name="Franco A."/>
            <person name="Dovell S."/>
            <person name="Moller C."/>
            <person name="Grandal M."/>
            <person name="Clark E."/>
            <person name="Mari F."/>
        </authorList>
    </citation>
    <scope>NUCLEOTIDE SEQUENCE [MRNA]</scope>
    <source>
        <tissue>Venom duct</tissue>
    </source>
</reference>
<accession>A0A2I6EDN8</accession>
<protein>
    <recommendedName>
        <fullName evidence="2">Conotoxin reg3.11</fullName>
        <shortName evidence="5">Rg3.11</shortName>
    </recommendedName>
</protein>
<proteinExistence type="evidence at transcript level"/>
<organism>
    <name type="scientific">Conus regius</name>
    <name type="common">Crown cone</name>
    <dbReference type="NCBI Taxonomy" id="101314"/>
    <lineage>
        <taxon>Eukaryota</taxon>
        <taxon>Metazoa</taxon>
        <taxon>Spiralia</taxon>
        <taxon>Lophotrochozoa</taxon>
        <taxon>Mollusca</taxon>
        <taxon>Gastropoda</taxon>
        <taxon>Caenogastropoda</taxon>
        <taxon>Neogastropoda</taxon>
        <taxon>Conoidea</taxon>
        <taxon>Conidae</taxon>
        <taxon>Conus</taxon>
        <taxon>Stephanoconus</taxon>
    </lineage>
</organism>
<name>CM311_CONRE</name>
<dbReference type="EMBL" id="MF588945">
    <property type="protein sequence ID" value="AUJ88069.1"/>
    <property type="molecule type" value="mRNA"/>
</dbReference>
<dbReference type="GO" id="GO:0005576">
    <property type="term" value="C:extracellular region"/>
    <property type="evidence" value="ECO:0007669"/>
    <property type="project" value="UniProtKB-SubCell"/>
</dbReference>
<dbReference type="GO" id="GO:0090729">
    <property type="term" value="F:toxin activity"/>
    <property type="evidence" value="ECO:0007669"/>
    <property type="project" value="UniProtKB-KW"/>
</dbReference>